<proteinExistence type="evidence at transcript level"/>
<name>PKHA4_RAT</name>
<dbReference type="EMBL" id="BC061738">
    <property type="protein sequence ID" value="AAH61738.1"/>
    <property type="molecule type" value="mRNA"/>
</dbReference>
<dbReference type="RefSeq" id="NP_954532.1">
    <property type="nucleotide sequence ID" value="NM_199101.1"/>
</dbReference>
<dbReference type="SMR" id="P60669"/>
<dbReference type="FunCoup" id="P60669">
    <property type="interactions" value="42"/>
</dbReference>
<dbReference type="STRING" id="10116.ENSRNOP00000028423"/>
<dbReference type="iPTMnet" id="P60669"/>
<dbReference type="PhosphoSitePlus" id="P60669"/>
<dbReference type="PaxDb" id="10116-ENSRNOP00000028423"/>
<dbReference type="Ensembl" id="ENSRNOT00000028423.6">
    <property type="protein sequence ID" value="ENSRNOP00000028423.4"/>
    <property type="gene ID" value="ENSRNOG00000020942.7"/>
</dbReference>
<dbReference type="GeneID" id="308584"/>
<dbReference type="KEGG" id="rno:308584"/>
<dbReference type="UCSC" id="RGD:735133">
    <property type="organism name" value="rat"/>
</dbReference>
<dbReference type="AGR" id="RGD:735133"/>
<dbReference type="CTD" id="57664"/>
<dbReference type="RGD" id="735133">
    <property type="gene designation" value="Plekha4"/>
</dbReference>
<dbReference type="eggNOG" id="ENOG502RI1J">
    <property type="taxonomic scope" value="Eukaryota"/>
</dbReference>
<dbReference type="GeneTree" id="ENSGT00940000161121"/>
<dbReference type="HOGENOM" id="CLU_020168_0_0_1"/>
<dbReference type="InParanoid" id="P60669"/>
<dbReference type="OMA" id="WRGMMTG"/>
<dbReference type="OrthoDB" id="43122at2759"/>
<dbReference type="PhylomeDB" id="P60669"/>
<dbReference type="Reactome" id="R-RNO-1660499">
    <property type="pathway name" value="Synthesis of PIPs at the plasma membrane"/>
</dbReference>
<dbReference type="PRO" id="PR:P60669"/>
<dbReference type="Proteomes" id="UP000002494">
    <property type="component" value="Chromosome 1"/>
</dbReference>
<dbReference type="Bgee" id="ENSRNOG00000020942">
    <property type="expression patterns" value="Expressed in esophagus and 19 other cell types or tissues"/>
</dbReference>
<dbReference type="GO" id="GO:0005737">
    <property type="term" value="C:cytoplasm"/>
    <property type="evidence" value="ECO:0007669"/>
    <property type="project" value="UniProtKB-SubCell"/>
</dbReference>
<dbReference type="GO" id="GO:0031234">
    <property type="term" value="C:extrinsic component of cytoplasmic side of plasma membrane"/>
    <property type="evidence" value="ECO:0000266"/>
    <property type="project" value="RGD"/>
</dbReference>
<dbReference type="GO" id="GO:0043325">
    <property type="term" value="F:phosphatidylinositol-3,4-bisphosphate binding"/>
    <property type="evidence" value="ECO:0000266"/>
    <property type="project" value="RGD"/>
</dbReference>
<dbReference type="GO" id="GO:0080025">
    <property type="term" value="F:phosphatidylinositol-3,5-bisphosphate binding"/>
    <property type="evidence" value="ECO:0000266"/>
    <property type="project" value="RGD"/>
</dbReference>
<dbReference type="GO" id="GO:0032266">
    <property type="term" value="F:phosphatidylinositol-3-phosphate binding"/>
    <property type="evidence" value="ECO:0000266"/>
    <property type="project" value="RGD"/>
</dbReference>
<dbReference type="GO" id="GO:0005546">
    <property type="term" value="F:phosphatidylinositol-4,5-bisphosphate binding"/>
    <property type="evidence" value="ECO:0000266"/>
    <property type="project" value="RGD"/>
</dbReference>
<dbReference type="GO" id="GO:0090263">
    <property type="term" value="P:positive regulation of canonical Wnt signaling pathway"/>
    <property type="evidence" value="ECO:0000266"/>
    <property type="project" value="RGD"/>
</dbReference>
<dbReference type="GO" id="GO:2000096">
    <property type="term" value="P:positive regulation of Wnt signaling pathway, planar cell polarity pathway"/>
    <property type="evidence" value="ECO:0000266"/>
    <property type="project" value="RGD"/>
</dbReference>
<dbReference type="CDD" id="cd13248">
    <property type="entry name" value="PH_PEPP1_2_3"/>
    <property type="match status" value="1"/>
</dbReference>
<dbReference type="FunFam" id="2.30.29.30:FF:000103">
    <property type="entry name" value="Pleckstrin homology domain-containing family A member 4"/>
    <property type="match status" value="1"/>
</dbReference>
<dbReference type="Gene3D" id="2.30.29.30">
    <property type="entry name" value="Pleckstrin-homology domain (PH domain)/Phosphotyrosine-binding domain (PTB)"/>
    <property type="match status" value="1"/>
</dbReference>
<dbReference type="InterPro" id="IPR011993">
    <property type="entry name" value="PH-like_dom_sf"/>
</dbReference>
<dbReference type="InterPro" id="IPR001849">
    <property type="entry name" value="PH_domain"/>
</dbReference>
<dbReference type="InterPro" id="IPR040392">
    <property type="entry name" value="PKHA4-7_PH"/>
</dbReference>
<dbReference type="PANTHER" id="PTHR12752">
    <property type="entry name" value="PHOSPHOINOSITOL 3-PHOSPHATE-BINDING PROTEIN"/>
    <property type="match status" value="1"/>
</dbReference>
<dbReference type="PANTHER" id="PTHR12752:SF7">
    <property type="entry name" value="PLECKSTRIN HOMOLOGY DOMAIN-CONTAINING FAMILY A MEMBER 4"/>
    <property type="match status" value="1"/>
</dbReference>
<dbReference type="Pfam" id="PF00169">
    <property type="entry name" value="PH"/>
    <property type="match status" value="1"/>
</dbReference>
<dbReference type="SMART" id="SM00233">
    <property type="entry name" value="PH"/>
    <property type="match status" value="1"/>
</dbReference>
<dbReference type="SUPFAM" id="SSF50729">
    <property type="entry name" value="PH domain-like"/>
    <property type="match status" value="1"/>
</dbReference>
<dbReference type="PROSITE" id="PS50003">
    <property type="entry name" value="PH_DOMAIN"/>
    <property type="match status" value="1"/>
</dbReference>
<gene>
    <name type="primary">Plekha4</name>
    <name type="synonym">Pepp1</name>
</gene>
<sequence length="779" mass="85642">MEQGRPRSSLSLTSSASTVSSLSSLSAKKPTRVVHKVHAFGKRNNALRRDPNLPVHIRGWLHKQDSSGLRLWKRRWFVLSGHCLFYYKDSREESVLGSVLLPSYSVRPDGPGAPRGRRFTFTAEHPGMRTYVLAADTLEDLRGWLRALGKASRAEGEDCGLPRSPARPRPGEGPGGPGGPPEVNRREEGRTSESPEVAPLSRGPGRHEMHAPGSSADLQPDTWSRRTRSPEPFSPLSRPPSPLSLPRPRSAPVRRPPLSAGDISFPARPHTPLSRIDVRPPLDWGPQRQTLSRPPIPRRGPFSEAGGGRPPRSPQLRTPEHRTQSTQVSSGSSTYLQLPPRPPGTQASMILLPGPPVDSTLHQSLETDTLLTKLCGQDRLLRQLQEDLDKRQEEKEQLEAALELTRQQLGQATREAAASGKAWGRQRLLQDRLVNVRAALCHLTQERERVWDTYSGLEQDLGTLRETLEYLLHLGSPQDRASAQQQLWMVEDTLAGLGGPQKQPPHTEPKSPSPAPQREESSERESLSESLELSSPQSPEVDWGQPPGGDRALSSSQSGVGSPRVSRASSPECRQQSSPLLRTKAPLARPRMSAQEQLERMRRNQACGLSLPRPTSPRLLTLGRTLSPVPRQPDMEQRPIVGAAKWLRSSGSWSSPRHSTTYSPVSGGHRERVLSLSQALATEASQWHRLMTASPERNLDTRGDCLQPSPQPPSEELPQVTSSPTSHKANSATTGFSCQGSGRGLAPWEPRWDPGKAPPALAQEEGAWPLRVTLLQSSF</sequence>
<feature type="chain" id="PRO_0000053882" description="Pleckstrin homology domain-containing family A member 4">
    <location>
        <begin position="1"/>
        <end position="779"/>
    </location>
</feature>
<feature type="domain" description="PH" evidence="3">
    <location>
        <begin position="54"/>
        <end position="153"/>
    </location>
</feature>
<feature type="region of interest" description="Disordered" evidence="4">
    <location>
        <begin position="152"/>
        <end position="355"/>
    </location>
</feature>
<feature type="region of interest" description="Disordered" evidence="4">
    <location>
        <begin position="495"/>
        <end position="669"/>
    </location>
</feature>
<feature type="region of interest" description="Disordered" evidence="4">
    <location>
        <begin position="694"/>
        <end position="766"/>
    </location>
</feature>
<feature type="compositionally biased region" description="Basic and acidic residues" evidence="4">
    <location>
        <begin position="183"/>
        <end position="193"/>
    </location>
</feature>
<feature type="compositionally biased region" description="Low complexity" evidence="4">
    <location>
        <begin position="246"/>
        <end position="259"/>
    </location>
</feature>
<feature type="compositionally biased region" description="Low complexity" evidence="4">
    <location>
        <begin position="324"/>
        <end position="334"/>
    </location>
</feature>
<feature type="compositionally biased region" description="Basic and acidic residues" evidence="4">
    <location>
        <begin position="517"/>
        <end position="527"/>
    </location>
</feature>
<feature type="compositionally biased region" description="Low complexity" evidence="4">
    <location>
        <begin position="528"/>
        <end position="540"/>
    </location>
</feature>
<feature type="compositionally biased region" description="Polar residues" evidence="4">
    <location>
        <begin position="567"/>
        <end position="580"/>
    </location>
</feature>
<feature type="compositionally biased region" description="Low complexity" evidence="4">
    <location>
        <begin position="608"/>
        <end position="627"/>
    </location>
</feature>
<feature type="compositionally biased region" description="Low complexity" evidence="4">
    <location>
        <begin position="649"/>
        <end position="659"/>
    </location>
</feature>
<feature type="compositionally biased region" description="Polar residues" evidence="4">
    <location>
        <begin position="720"/>
        <end position="740"/>
    </location>
</feature>
<feature type="modified residue" description="Phosphoserine" evidence="2">
    <location>
        <position position="164"/>
    </location>
</feature>
<feature type="modified residue" description="Phosphoserine" evidence="2">
    <location>
        <position position="562"/>
    </location>
</feature>
<evidence type="ECO:0000250" key="1"/>
<evidence type="ECO:0000250" key="2">
    <source>
        <dbReference type="UniProtKB" id="Q9H4M7"/>
    </source>
</evidence>
<evidence type="ECO:0000255" key="3">
    <source>
        <dbReference type="PROSITE-ProRule" id="PRU00145"/>
    </source>
</evidence>
<evidence type="ECO:0000256" key="4">
    <source>
        <dbReference type="SAM" id="MobiDB-lite"/>
    </source>
</evidence>
<evidence type="ECO:0000305" key="5"/>
<comment type="function">
    <text evidence="1">Binds specifically to phosphatidylinositol 3-phosphate (PtdIns3P), but not to other phosphoinositides.</text>
</comment>
<comment type="subcellular location">
    <subcellularLocation>
        <location evidence="5">Cytoplasm</location>
    </subcellularLocation>
    <subcellularLocation>
        <location evidence="5">Membrane</location>
        <topology evidence="5">Peripheral membrane protein</topology>
    </subcellularLocation>
</comment>
<accession>P60669</accession>
<organism>
    <name type="scientific">Rattus norvegicus</name>
    <name type="common">Rat</name>
    <dbReference type="NCBI Taxonomy" id="10116"/>
    <lineage>
        <taxon>Eukaryota</taxon>
        <taxon>Metazoa</taxon>
        <taxon>Chordata</taxon>
        <taxon>Craniata</taxon>
        <taxon>Vertebrata</taxon>
        <taxon>Euteleostomi</taxon>
        <taxon>Mammalia</taxon>
        <taxon>Eutheria</taxon>
        <taxon>Euarchontoglires</taxon>
        <taxon>Glires</taxon>
        <taxon>Rodentia</taxon>
        <taxon>Myomorpha</taxon>
        <taxon>Muroidea</taxon>
        <taxon>Muridae</taxon>
        <taxon>Murinae</taxon>
        <taxon>Rattus</taxon>
    </lineage>
</organism>
<keyword id="KW-0963">Cytoplasm</keyword>
<keyword id="KW-0446">Lipid-binding</keyword>
<keyword id="KW-0472">Membrane</keyword>
<keyword id="KW-0597">Phosphoprotein</keyword>
<keyword id="KW-1185">Reference proteome</keyword>
<protein>
    <recommendedName>
        <fullName>Pleckstrin homology domain-containing family A member 4</fullName>
        <shortName>PH domain-containing family A member 4</shortName>
    </recommendedName>
    <alternativeName>
        <fullName>Phosphoinositol 3-phosphate-binding protein 1</fullName>
        <shortName>PEPP-1</shortName>
    </alternativeName>
</protein>
<reference key="1">
    <citation type="journal article" date="2004" name="Genome Res.">
        <title>The status, quality, and expansion of the NIH full-length cDNA project: the Mammalian Gene Collection (MGC).</title>
        <authorList>
            <consortium name="The MGC Project Team"/>
        </authorList>
    </citation>
    <scope>NUCLEOTIDE SEQUENCE [LARGE SCALE MRNA]</scope>
    <source>
        <tissue>Prostate</tissue>
    </source>
</reference>